<name>FADI_ECO27</name>
<proteinExistence type="inferred from homology"/>
<dbReference type="EC" id="2.3.1.16" evidence="1"/>
<dbReference type="EMBL" id="FM180568">
    <property type="protein sequence ID" value="CAS10029.1"/>
    <property type="molecule type" value="Genomic_DNA"/>
</dbReference>
<dbReference type="RefSeq" id="WP_000531916.1">
    <property type="nucleotide sequence ID" value="NC_011601.1"/>
</dbReference>
<dbReference type="SMR" id="B7UFZ9"/>
<dbReference type="KEGG" id="ecg:E2348C_2481"/>
<dbReference type="HOGENOM" id="CLU_031026_2_0_6"/>
<dbReference type="UniPathway" id="UPA00659"/>
<dbReference type="Proteomes" id="UP000008205">
    <property type="component" value="Chromosome"/>
</dbReference>
<dbReference type="GO" id="GO:0005829">
    <property type="term" value="C:cytosol"/>
    <property type="evidence" value="ECO:0007669"/>
    <property type="project" value="TreeGrafter"/>
</dbReference>
<dbReference type="GO" id="GO:0003988">
    <property type="term" value="F:acetyl-CoA C-acyltransferase activity"/>
    <property type="evidence" value="ECO:0007669"/>
    <property type="project" value="UniProtKB-UniRule"/>
</dbReference>
<dbReference type="GO" id="GO:0006635">
    <property type="term" value="P:fatty acid beta-oxidation"/>
    <property type="evidence" value="ECO:0007669"/>
    <property type="project" value="UniProtKB-UniRule"/>
</dbReference>
<dbReference type="CDD" id="cd00751">
    <property type="entry name" value="thiolase"/>
    <property type="match status" value="1"/>
</dbReference>
<dbReference type="FunFam" id="3.40.47.10:FF:000011">
    <property type="entry name" value="3-ketoacyl-CoA thiolase"/>
    <property type="match status" value="1"/>
</dbReference>
<dbReference type="Gene3D" id="3.40.47.10">
    <property type="match status" value="1"/>
</dbReference>
<dbReference type="HAMAP" id="MF_01618">
    <property type="entry name" value="FadI"/>
    <property type="match status" value="1"/>
</dbReference>
<dbReference type="InterPro" id="IPR012806">
    <property type="entry name" value="Ac-CoA_C-AcTrfase_FadI"/>
</dbReference>
<dbReference type="InterPro" id="IPR002155">
    <property type="entry name" value="Thiolase"/>
</dbReference>
<dbReference type="InterPro" id="IPR016039">
    <property type="entry name" value="Thiolase-like"/>
</dbReference>
<dbReference type="InterPro" id="IPR020615">
    <property type="entry name" value="Thiolase_acyl_enz_int_AS"/>
</dbReference>
<dbReference type="InterPro" id="IPR020610">
    <property type="entry name" value="Thiolase_AS"/>
</dbReference>
<dbReference type="InterPro" id="IPR020617">
    <property type="entry name" value="Thiolase_C"/>
</dbReference>
<dbReference type="InterPro" id="IPR020613">
    <property type="entry name" value="Thiolase_CS"/>
</dbReference>
<dbReference type="InterPro" id="IPR020616">
    <property type="entry name" value="Thiolase_N"/>
</dbReference>
<dbReference type="NCBIfam" id="TIGR01930">
    <property type="entry name" value="AcCoA-C-Actrans"/>
    <property type="match status" value="1"/>
</dbReference>
<dbReference type="NCBIfam" id="TIGR02446">
    <property type="entry name" value="FadI"/>
    <property type="match status" value="1"/>
</dbReference>
<dbReference type="NCBIfam" id="NF006516">
    <property type="entry name" value="PRK08963.1"/>
    <property type="match status" value="1"/>
</dbReference>
<dbReference type="PANTHER" id="PTHR18919:SF107">
    <property type="entry name" value="ACETYL-COA ACETYLTRANSFERASE, CYTOSOLIC"/>
    <property type="match status" value="1"/>
</dbReference>
<dbReference type="PANTHER" id="PTHR18919">
    <property type="entry name" value="ACETYL-COA C-ACYLTRANSFERASE"/>
    <property type="match status" value="1"/>
</dbReference>
<dbReference type="Pfam" id="PF02803">
    <property type="entry name" value="Thiolase_C"/>
    <property type="match status" value="1"/>
</dbReference>
<dbReference type="Pfam" id="PF00108">
    <property type="entry name" value="Thiolase_N"/>
    <property type="match status" value="1"/>
</dbReference>
<dbReference type="PIRSF" id="PIRSF000429">
    <property type="entry name" value="Ac-CoA_Ac_transf"/>
    <property type="match status" value="1"/>
</dbReference>
<dbReference type="SUPFAM" id="SSF53901">
    <property type="entry name" value="Thiolase-like"/>
    <property type="match status" value="2"/>
</dbReference>
<dbReference type="PROSITE" id="PS00098">
    <property type="entry name" value="THIOLASE_1"/>
    <property type="match status" value="1"/>
</dbReference>
<dbReference type="PROSITE" id="PS00737">
    <property type="entry name" value="THIOLASE_2"/>
    <property type="match status" value="1"/>
</dbReference>
<dbReference type="PROSITE" id="PS00099">
    <property type="entry name" value="THIOLASE_3"/>
    <property type="match status" value="1"/>
</dbReference>
<organism>
    <name type="scientific">Escherichia coli O127:H6 (strain E2348/69 / EPEC)</name>
    <dbReference type="NCBI Taxonomy" id="574521"/>
    <lineage>
        <taxon>Bacteria</taxon>
        <taxon>Pseudomonadati</taxon>
        <taxon>Pseudomonadota</taxon>
        <taxon>Gammaproteobacteria</taxon>
        <taxon>Enterobacterales</taxon>
        <taxon>Enterobacteriaceae</taxon>
        <taxon>Escherichia</taxon>
    </lineage>
</organism>
<accession>B7UFZ9</accession>
<sequence length="436" mass="46531">MGQVLPLVTRQGDRIAIVSGLRTPFARQATAFHGIPAGDLGKMVVGELLARTEIPAEVIEQLVFGQVVQMPEAPNIAREIVLGTGMNVHTDAYSVSRACATSFQAVANVAESLMAGTIRAGIAGGADSSSVLPIGVSKKLARVLVDVNKARTMSQRLKLFSRLRLRDLMPVPPAVAEYSTGLRMGDTAEQMAKTYGITREQQDALAHRSHQRAAQAWSEGKLKEEVMTAFIPPYKQPLVEDNNIRGNSSLADYAKLRPAFDRKHGTVTAANSTPLTDGAAAVILMTESRAKELGLVPLGYLRSYAFTAIDVWQDMLLGPAWSTPLALERAGLTMSDLTLIDMHEAFAAQTLANIQLLGSERFARDVLGRAHATGEVDDSKFNVLGGSIAYGHPFAATGARMITQTLHELRRRGGGFGLVTACAAGGLGAAMVLEAE</sequence>
<evidence type="ECO:0000255" key="1">
    <source>
        <dbReference type="HAMAP-Rule" id="MF_01618"/>
    </source>
</evidence>
<feature type="chain" id="PRO_1000185957" description="3-ketoacyl-CoA thiolase">
    <location>
        <begin position="1"/>
        <end position="436"/>
    </location>
</feature>
<feature type="active site" description="Acyl-thioester intermediate" evidence="1">
    <location>
        <position position="99"/>
    </location>
</feature>
<feature type="active site" description="Proton acceptor" evidence="1">
    <location>
        <position position="392"/>
    </location>
</feature>
<feature type="active site" description="Proton acceptor" evidence="1">
    <location>
        <position position="422"/>
    </location>
</feature>
<protein>
    <recommendedName>
        <fullName evidence="1">3-ketoacyl-CoA thiolase</fullName>
        <ecNumber evidence="1">2.3.1.16</ecNumber>
    </recommendedName>
    <alternativeName>
        <fullName evidence="1">ACSs</fullName>
    </alternativeName>
    <alternativeName>
        <fullName evidence="1">Acetyl-CoA acyltransferase</fullName>
    </alternativeName>
    <alternativeName>
        <fullName evidence="1">Acyl-CoA ligase</fullName>
    </alternativeName>
    <alternativeName>
        <fullName evidence="1">Beta-ketothiolase</fullName>
    </alternativeName>
    <alternativeName>
        <fullName evidence="1">Fatty acid oxidation complex subunit beta</fullName>
    </alternativeName>
</protein>
<keyword id="KW-0012">Acyltransferase</keyword>
<keyword id="KW-0963">Cytoplasm</keyword>
<keyword id="KW-0276">Fatty acid metabolism</keyword>
<keyword id="KW-0442">Lipid degradation</keyword>
<keyword id="KW-0443">Lipid metabolism</keyword>
<keyword id="KW-1185">Reference proteome</keyword>
<keyword id="KW-0808">Transferase</keyword>
<gene>
    <name evidence="1" type="primary">fadI</name>
    <name type="ordered locus">E2348C_2481</name>
</gene>
<comment type="function">
    <text evidence="1">Catalyzes the final step of fatty acid oxidation in which acetyl-CoA is released and the CoA ester of a fatty acid two carbons shorter is formed.</text>
</comment>
<comment type="catalytic activity">
    <reaction evidence="1">
        <text>an acyl-CoA + acetyl-CoA = a 3-oxoacyl-CoA + CoA</text>
        <dbReference type="Rhea" id="RHEA:21564"/>
        <dbReference type="ChEBI" id="CHEBI:57287"/>
        <dbReference type="ChEBI" id="CHEBI:57288"/>
        <dbReference type="ChEBI" id="CHEBI:58342"/>
        <dbReference type="ChEBI" id="CHEBI:90726"/>
        <dbReference type="EC" id="2.3.1.16"/>
    </reaction>
</comment>
<comment type="pathway">
    <text evidence="1">Lipid metabolism; fatty acid beta-oxidation.</text>
</comment>
<comment type="subunit">
    <text evidence="1">Heterotetramer of two alpha chains (FadJ) and two beta chains (FadI).</text>
</comment>
<comment type="subcellular location">
    <subcellularLocation>
        <location evidence="1">Cytoplasm</location>
    </subcellularLocation>
</comment>
<comment type="similarity">
    <text evidence="1">Belongs to the thiolase-like superfamily. Thiolase family.</text>
</comment>
<reference key="1">
    <citation type="journal article" date="2009" name="J. Bacteriol.">
        <title>Complete genome sequence and comparative genome analysis of enteropathogenic Escherichia coli O127:H6 strain E2348/69.</title>
        <authorList>
            <person name="Iguchi A."/>
            <person name="Thomson N.R."/>
            <person name="Ogura Y."/>
            <person name="Saunders D."/>
            <person name="Ooka T."/>
            <person name="Henderson I.R."/>
            <person name="Harris D."/>
            <person name="Asadulghani M."/>
            <person name="Kurokawa K."/>
            <person name="Dean P."/>
            <person name="Kenny B."/>
            <person name="Quail M.A."/>
            <person name="Thurston S."/>
            <person name="Dougan G."/>
            <person name="Hayashi T."/>
            <person name="Parkhill J."/>
            <person name="Frankel G."/>
        </authorList>
    </citation>
    <scope>NUCLEOTIDE SEQUENCE [LARGE SCALE GENOMIC DNA]</scope>
    <source>
        <strain>E2348/69 / EPEC</strain>
    </source>
</reference>